<reference evidence="10" key="1">
    <citation type="submission" date="2007-03" db="EMBL/GenBank/DDBJ databases">
        <title>Molecular cloning of Xenopus Costal2.</title>
        <authorList>
            <person name="Aguero T.H."/>
            <person name="Fernandez J.P."/>
            <person name="Vega Lopez G."/>
            <person name="Aybar M.J."/>
        </authorList>
    </citation>
    <scope>NUCLEOTIDE SEQUENCE [GENOMIC DNA / MRNA]</scope>
</reference>
<reference evidence="10" key="2">
    <citation type="submission" date="2008-04" db="EMBL/GenBank/DDBJ databases">
        <authorList>
            <consortium name="NIH - Xenopus Gene Collection (XGC) project"/>
        </authorList>
    </citation>
    <scope>NUCLEOTIDE SEQUENCE [LARGE SCALE MRNA]</scope>
    <source>
        <tissue evidence="9">Testis</tissue>
    </source>
</reference>
<keyword id="KW-0067">ATP-binding</keyword>
<keyword id="KW-0131">Cell cycle</keyword>
<keyword id="KW-0132">Cell division</keyword>
<keyword id="KW-0175">Coiled coil</keyword>
<keyword id="KW-0963">Cytoplasm</keyword>
<keyword id="KW-0206">Cytoskeleton</keyword>
<keyword id="KW-0493">Microtubule</keyword>
<keyword id="KW-0498">Mitosis</keyword>
<keyword id="KW-0505">Motor protein</keyword>
<keyword id="KW-0547">Nucleotide-binding</keyword>
<keyword id="KW-0597">Phosphoprotein</keyword>
<keyword id="KW-1185">Reference proteome</keyword>
<name>KIF11_XENTR</name>
<evidence type="ECO:0000250" key="1"/>
<evidence type="ECO:0000250" key="2">
    <source>
        <dbReference type="UniProtKB" id="O15066"/>
    </source>
</evidence>
<evidence type="ECO:0000250" key="3">
    <source>
        <dbReference type="UniProtKB" id="P28025"/>
    </source>
</evidence>
<evidence type="ECO:0000250" key="4">
    <source>
        <dbReference type="UniProtKB" id="P52732"/>
    </source>
</evidence>
<evidence type="ECO:0000250" key="5">
    <source>
        <dbReference type="UniProtKB" id="Q91783"/>
    </source>
</evidence>
<evidence type="ECO:0000255" key="6"/>
<evidence type="ECO:0000255" key="7">
    <source>
        <dbReference type="PROSITE-ProRule" id="PRU00283"/>
    </source>
</evidence>
<evidence type="ECO:0000256" key="8">
    <source>
        <dbReference type="SAM" id="MobiDB-lite"/>
    </source>
</evidence>
<evidence type="ECO:0000312" key="9">
    <source>
        <dbReference type="EMBL" id="AAI66147.1"/>
    </source>
</evidence>
<evidence type="ECO:0000312" key="10">
    <source>
        <dbReference type="EMBL" id="ABX55790.1"/>
    </source>
</evidence>
<dbReference type="EMBL" id="EF524557">
    <property type="protein sequence ID" value="ABX55790.1"/>
    <property type="molecule type" value="mRNA"/>
</dbReference>
<dbReference type="EMBL" id="EF524558">
    <property type="protein sequence ID" value="ABX55791.1"/>
    <property type="molecule type" value="Genomic_DNA"/>
</dbReference>
<dbReference type="EMBL" id="BC166147">
    <property type="protein sequence ID" value="AAI66147.1"/>
    <property type="molecule type" value="mRNA"/>
</dbReference>
<dbReference type="RefSeq" id="NP_001016116.2">
    <property type="nucleotide sequence ID" value="NM_001016116.3"/>
</dbReference>
<dbReference type="SMR" id="B2GU58"/>
<dbReference type="FunCoup" id="B2GU58">
    <property type="interactions" value="1720"/>
</dbReference>
<dbReference type="STRING" id="8364.ENSXETP00000033961"/>
<dbReference type="PaxDb" id="8364-ENSXETP00000026683"/>
<dbReference type="GeneID" id="548870"/>
<dbReference type="KEGG" id="xtr:548870"/>
<dbReference type="AGR" id="Xenbase:XB-GENE-978999"/>
<dbReference type="CTD" id="3832"/>
<dbReference type="Xenbase" id="XB-GENE-978999">
    <property type="gene designation" value="kif11"/>
</dbReference>
<dbReference type="eggNOG" id="KOG0243">
    <property type="taxonomic scope" value="Eukaryota"/>
</dbReference>
<dbReference type="InParanoid" id="B2GU58"/>
<dbReference type="OrthoDB" id="3176171at2759"/>
<dbReference type="Reactome" id="R-XTR-6811434">
    <property type="pathway name" value="COPI-dependent Golgi-to-ER retrograde traffic"/>
</dbReference>
<dbReference type="Reactome" id="R-XTR-983189">
    <property type="pathway name" value="Kinesins"/>
</dbReference>
<dbReference type="Proteomes" id="UP000008143">
    <property type="component" value="Chromosome 7"/>
</dbReference>
<dbReference type="GO" id="GO:0005813">
    <property type="term" value="C:centrosome"/>
    <property type="evidence" value="ECO:0000250"/>
    <property type="project" value="UniProtKB"/>
</dbReference>
<dbReference type="GO" id="GO:0005737">
    <property type="term" value="C:cytoplasm"/>
    <property type="evidence" value="ECO:0000250"/>
    <property type="project" value="UniProtKB"/>
</dbReference>
<dbReference type="GO" id="GO:0005876">
    <property type="term" value="C:spindle microtubule"/>
    <property type="evidence" value="ECO:0000250"/>
    <property type="project" value="UniProtKB"/>
</dbReference>
<dbReference type="GO" id="GO:0000922">
    <property type="term" value="C:spindle pole"/>
    <property type="evidence" value="ECO:0000250"/>
    <property type="project" value="UniProtKB"/>
</dbReference>
<dbReference type="GO" id="GO:0005524">
    <property type="term" value="F:ATP binding"/>
    <property type="evidence" value="ECO:0007669"/>
    <property type="project" value="UniProtKB-KW"/>
</dbReference>
<dbReference type="GO" id="GO:0008017">
    <property type="term" value="F:microtubule binding"/>
    <property type="evidence" value="ECO:0000250"/>
    <property type="project" value="UniProtKB"/>
</dbReference>
<dbReference type="GO" id="GO:0003777">
    <property type="term" value="F:microtubule motor activity"/>
    <property type="evidence" value="ECO:0000250"/>
    <property type="project" value="UniProtKB"/>
</dbReference>
<dbReference type="GO" id="GO:0019901">
    <property type="term" value="F:protein kinase binding"/>
    <property type="evidence" value="ECO:0000250"/>
    <property type="project" value="UniProtKB"/>
</dbReference>
<dbReference type="GO" id="GO:0051301">
    <property type="term" value="P:cell division"/>
    <property type="evidence" value="ECO:0007669"/>
    <property type="project" value="UniProtKB-KW"/>
</dbReference>
<dbReference type="GO" id="GO:0007018">
    <property type="term" value="P:microtubule-based movement"/>
    <property type="evidence" value="ECO:0007669"/>
    <property type="project" value="InterPro"/>
</dbReference>
<dbReference type="GO" id="GO:0090307">
    <property type="term" value="P:mitotic spindle assembly"/>
    <property type="evidence" value="ECO:0000250"/>
    <property type="project" value="UniProtKB"/>
</dbReference>
<dbReference type="CDD" id="cd01364">
    <property type="entry name" value="KISc_BimC_Eg5"/>
    <property type="match status" value="1"/>
</dbReference>
<dbReference type="FunFam" id="3.40.850.10:FF:000035">
    <property type="entry name" value="Kinesin-like protein KIF11"/>
    <property type="match status" value="1"/>
</dbReference>
<dbReference type="Gene3D" id="3.40.850.10">
    <property type="entry name" value="Kinesin motor domain"/>
    <property type="match status" value="1"/>
</dbReference>
<dbReference type="InterPro" id="IPR047149">
    <property type="entry name" value="KIF11-like"/>
</dbReference>
<dbReference type="InterPro" id="IPR047241">
    <property type="entry name" value="KIF11-like_kin_motor_dom"/>
</dbReference>
<dbReference type="InterPro" id="IPR025901">
    <property type="entry name" value="Kinesin-assoc_MT-bd_dom"/>
</dbReference>
<dbReference type="InterPro" id="IPR019821">
    <property type="entry name" value="Kinesin_motor_CS"/>
</dbReference>
<dbReference type="InterPro" id="IPR001752">
    <property type="entry name" value="Kinesin_motor_dom"/>
</dbReference>
<dbReference type="InterPro" id="IPR036961">
    <property type="entry name" value="Kinesin_motor_dom_sf"/>
</dbReference>
<dbReference type="InterPro" id="IPR027417">
    <property type="entry name" value="P-loop_NTPase"/>
</dbReference>
<dbReference type="PANTHER" id="PTHR47970">
    <property type="entry name" value="KINESIN-LIKE PROTEIN KIF11"/>
    <property type="match status" value="1"/>
</dbReference>
<dbReference type="PANTHER" id="PTHR47970:SF26">
    <property type="entry name" value="KINESIN-LIKE PROTEIN KIF11"/>
    <property type="match status" value="1"/>
</dbReference>
<dbReference type="Pfam" id="PF00225">
    <property type="entry name" value="Kinesin"/>
    <property type="match status" value="1"/>
</dbReference>
<dbReference type="Pfam" id="PF13931">
    <property type="entry name" value="Microtub_bind"/>
    <property type="match status" value="1"/>
</dbReference>
<dbReference type="PRINTS" id="PR00380">
    <property type="entry name" value="KINESINHEAVY"/>
</dbReference>
<dbReference type="SMART" id="SM00129">
    <property type="entry name" value="KISc"/>
    <property type="match status" value="1"/>
</dbReference>
<dbReference type="SUPFAM" id="SSF52540">
    <property type="entry name" value="P-loop containing nucleoside triphosphate hydrolases"/>
    <property type="match status" value="1"/>
</dbReference>
<dbReference type="PROSITE" id="PS00411">
    <property type="entry name" value="KINESIN_MOTOR_1"/>
    <property type="match status" value="1"/>
</dbReference>
<dbReference type="PROSITE" id="PS50067">
    <property type="entry name" value="KINESIN_MOTOR_2"/>
    <property type="match status" value="1"/>
</dbReference>
<gene>
    <name evidence="9" type="primary">kif11</name>
    <name evidence="10" type="synonym">cos2</name>
</gene>
<sequence>MSSQNSFMSSKKDDKGKNIQVVVRCRPFNQLERKASSHSVLECDAPRKEVCVRTGGINDKLGKKTYTFDMVFGPAAKQIDVYRSVVCPILDEVIMGYNCTVFAYGQTGTGKTFTMEGERSADEEFTWEQDPLAGIIPRTLHQIFEKLSENGTEFSVKVSLLEIYNEELFDLLSPSPDVGERLQMFDDPRNKRGVIIKGLEEVSVHNKDEVYHILERGAARRKTASTLMNAYSSRSHSVFSVTIHMKETTVDGEELVKIGKLNLVDLAGSENIGRSGAVDKRAREAGNINQSLLTLGRVITALVERAPHIPYRESKLTRILQDSLGGRTKTSIIATVSPASINLEETVSTLEYANRAKNIMNKPEVNQKLTKRALIKEYTEEIERLKRDLATAREKNGVYLSNENYEQLQGKVLSQEEIITEYTEKITAMEEEIKRINELFAENKKELEECTTILQCKEKELEETQKNLHESKEQLAQEAFVVTALETTEKKLHGTANKLLTTVRETSKDVSGLHAKLDRKRAVDQHNTQVHENFAEQMDKRFSVIERSVDEYSVKQQGMLDFYTNSIDNLLGASSAALSVTATAVAKSFTSVQETVSEKVSHSVDEILKQETLSSQAKDDLQKLMAAHRTGLEQALRTDLLPVVTAVLNLNSHLSHCLQNFQAVADKIDSHKEEMNSFFTEHSRSLHRLRLDSGSALSSIQSEYESLKVEIETAQSMHSEGVNNLIGSLQNQLNLLAMETQQNFSGFLAKGGKLQKSVGCLQQDLDSISSDAIEHTSSHHDKFAGQSQDIAVEIRQLAASNMGTLEESSKQCEKLTGSINAISRESQHWCESASQQIDSLLEEQVCYLRTSKKHLQSLQKDVEVGCGASVVEITEHVNAQRQAEEKALTSLVEQVRDDKEMLGEQRLELHEQVQSGQNKVNSYLNEELRNDVPTGTTPQRRDYVYPSLLVRTKPRDVLLEQFRQQQQEYLESISSVISEAVEPPVEQDSLEDEPPVAVNDSVMSEKSCIDLSMVCQENGGVPFFQQKKALRKEKENRANTTLLERSKIMDEAEQSLPKSKLPLRMQN</sequence>
<feature type="chain" id="PRO_0000399385" description="Kinesin-like protein KIF11">
    <location>
        <begin position="1"/>
        <end position="1067"/>
    </location>
</feature>
<feature type="domain" description="Kinesin motor" evidence="7">
    <location>
        <begin position="18"/>
        <end position="359"/>
    </location>
</feature>
<feature type="region of interest" description="Disordered" evidence="8">
    <location>
        <begin position="1048"/>
        <end position="1067"/>
    </location>
</feature>
<feature type="coiled-coil region" evidence="6">
    <location>
        <begin position="365"/>
        <end position="480"/>
    </location>
</feature>
<feature type="binding site" evidence="2 7">
    <location>
        <begin position="105"/>
        <end position="112"/>
    </location>
    <ligand>
        <name>ATP</name>
        <dbReference type="ChEBI" id="CHEBI:30616"/>
    </ligand>
</feature>
<feature type="modified residue" description="Phosphothreonine; by CDK1" evidence="3">
    <location>
        <position position="937"/>
    </location>
</feature>
<feature type="modified residue" description="Phosphoserine; by NEK6" evidence="1">
    <location>
        <position position="1046"/>
    </location>
</feature>
<comment type="function">
    <text evidence="4 5">Plus end-directed motor protein required for establishing a bipolar spindle. Associates with both interphase and mitotic spindle microtubules. May be involved in nuclear divisions taking place during the development of unfertilized eggs. Required in non-mitotic cells for transport of secretory proteins from the Golgi complex to the cell surface.</text>
</comment>
<comment type="subunit">
    <text evidence="3">Heterotetramer of two heavy and two light chains. Interacts with aurka (By similarity).</text>
</comment>
<comment type="subcellular location">
    <subcellularLocation>
        <location evidence="3">Cytoplasm</location>
    </subcellularLocation>
    <subcellularLocation>
        <location evidence="3">Cytoplasm</location>
        <location evidence="3">Cytoskeleton</location>
        <location evidence="3">Spindle pole</location>
    </subcellularLocation>
    <text evidence="3">Concentrated around the polar ends of both meiotic and mitotic spindles.</text>
</comment>
<comment type="PTM">
    <text evidence="1">Phosphorylation of Thr-937 during mitosis controls the association of this protein with the spindle apparatus.</text>
</comment>
<comment type="PTM">
    <text evidence="1">A subset of this protein primarily localized at the spindle pole is phosphorylated by NEK6 during mitosis.</text>
</comment>
<comment type="PTM">
    <text evidence="3">Phosphorylated on a serine residue by aurka.</text>
</comment>
<comment type="similarity">
    <text evidence="7">Belongs to the TRAFAC class myosin-kinesin ATPase superfamily. Kinesin family. BimC subfamily.</text>
</comment>
<accession>B2GU58</accession>
<accession>D0PPG2</accession>
<proteinExistence type="evidence at transcript level"/>
<protein>
    <recommendedName>
        <fullName evidence="4 9">Kinesin-like protein KIF11</fullName>
    </recommendedName>
    <alternativeName>
        <fullName evidence="4 10">Costal2</fullName>
    </alternativeName>
</protein>
<organism>
    <name type="scientific">Xenopus tropicalis</name>
    <name type="common">Western clawed frog</name>
    <name type="synonym">Silurana tropicalis</name>
    <dbReference type="NCBI Taxonomy" id="8364"/>
    <lineage>
        <taxon>Eukaryota</taxon>
        <taxon>Metazoa</taxon>
        <taxon>Chordata</taxon>
        <taxon>Craniata</taxon>
        <taxon>Vertebrata</taxon>
        <taxon>Euteleostomi</taxon>
        <taxon>Amphibia</taxon>
        <taxon>Batrachia</taxon>
        <taxon>Anura</taxon>
        <taxon>Pipoidea</taxon>
        <taxon>Pipidae</taxon>
        <taxon>Xenopodinae</taxon>
        <taxon>Xenopus</taxon>
        <taxon>Silurana</taxon>
    </lineage>
</organism>